<feature type="chain" id="PRO_1000146390" description="Small ribosomal subunit protein uS19">
    <location>
        <begin position="1"/>
        <end position="92"/>
    </location>
</feature>
<gene>
    <name evidence="1" type="primary">rpsS</name>
    <name type="ordered locus">EC55989_3732</name>
</gene>
<keyword id="KW-1185">Reference proteome</keyword>
<keyword id="KW-0687">Ribonucleoprotein</keyword>
<keyword id="KW-0689">Ribosomal protein</keyword>
<keyword id="KW-0694">RNA-binding</keyword>
<keyword id="KW-0699">rRNA-binding</keyword>
<protein>
    <recommendedName>
        <fullName evidence="1">Small ribosomal subunit protein uS19</fullName>
    </recommendedName>
    <alternativeName>
        <fullName evidence="2">30S ribosomal protein S19</fullName>
    </alternativeName>
</protein>
<comment type="function">
    <text evidence="1">Protein S19 forms a complex with S13 that binds strongly to the 16S ribosomal RNA.</text>
</comment>
<comment type="similarity">
    <text evidence="1">Belongs to the universal ribosomal protein uS19 family.</text>
</comment>
<reference key="1">
    <citation type="journal article" date="2009" name="PLoS Genet.">
        <title>Organised genome dynamics in the Escherichia coli species results in highly diverse adaptive paths.</title>
        <authorList>
            <person name="Touchon M."/>
            <person name="Hoede C."/>
            <person name="Tenaillon O."/>
            <person name="Barbe V."/>
            <person name="Baeriswyl S."/>
            <person name="Bidet P."/>
            <person name="Bingen E."/>
            <person name="Bonacorsi S."/>
            <person name="Bouchier C."/>
            <person name="Bouvet O."/>
            <person name="Calteau A."/>
            <person name="Chiapello H."/>
            <person name="Clermont O."/>
            <person name="Cruveiller S."/>
            <person name="Danchin A."/>
            <person name="Diard M."/>
            <person name="Dossat C."/>
            <person name="Karoui M.E."/>
            <person name="Frapy E."/>
            <person name="Garry L."/>
            <person name="Ghigo J.M."/>
            <person name="Gilles A.M."/>
            <person name="Johnson J."/>
            <person name="Le Bouguenec C."/>
            <person name="Lescat M."/>
            <person name="Mangenot S."/>
            <person name="Martinez-Jehanne V."/>
            <person name="Matic I."/>
            <person name="Nassif X."/>
            <person name="Oztas S."/>
            <person name="Petit M.A."/>
            <person name="Pichon C."/>
            <person name="Rouy Z."/>
            <person name="Ruf C.S."/>
            <person name="Schneider D."/>
            <person name="Tourret J."/>
            <person name="Vacherie B."/>
            <person name="Vallenet D."/>
            <person name="Medigue C."/>
            <person name="Rocha E.P.C."/>
            <person name="Denamur E."/>
        </authorList>
    </citation>
    <scope>NUCLEOTIDE SEQUENCE [LARGE SCALE GENOMIC DNA]</scope>
    <source>
        <strain>55989 / EAEC</strain>
    </source>
</reference>
<name>RS19_ECO55</name>
<evidence type="ECO:0000255" key="1">
    <source>
        <dbReference type="HAMAP-Rule" id="MF_00531"/>
    </source>
</evidence>
<evidence type="ECO:0000305" key="2"/>
<accession>B7L4K5</accession>
<proteinExistence type="inferred from homology"/>
<organism>
    <name type="scientific">Escherichia coli (strain 55989 / EAEC)</name>
    <dbReference type="NCBI Taxonomy" id="585055"/>
    <lineage>
        <taxon>Bacteria</taxon>
        <taxon>Pseudomonadati</taxon>
        <taxon>Pseudomonadota</taxon>
        <taxon>Gammaproteobacteria</taxon>
        <taxon>Enterobacterales</taxon>
        <taxon>Enterobacteriaceae</taxon>
        <taxon>Escherichia</taxon>
    </lineage>
</organism>
<dbReference type="EMBL" id="CU928145">
    <property type="protein sequence ID" value="CAV00031.1"/>
    <property type="molecule type" value="Genomic_DNA"/>
</dbReference>
<dbReference type="RefSeq" id="WP_001138117.1">
    <property type="nucleotide sequence ID" value="NZ_CP028304.1"/>
</dbReference>
<dbReference type="SMR" id="B7L4K5"/>
<dbReference type="GeneID" id="98390438"/>
<dbReference type="KEGG" id="eck:EC55989_3732"/>
<dbReference type="HOGENOM" id="CLU_144911_0_1_6"/>
<dbReference type="Proteomes" id="UP000000746">
    <property type="component" value="Chromosome"/>
</dbReference>
<dbReference type="GO" id="GO:0005737">
    <property type="term" value="C:cytoplasm"/>
    <property type="evidence" value="ECO:0007669"/>
    <property type="project" value="UniProtKB-ARBA"/>
</dbReference>
<dbReference type="GO" id="GO:0015935">
    <property type="term" value="C:small ribosomal subunit"/>
    <property type="evidence" value="ECO:0007669"/>
    <property type="project" value="InterPro"/>
</dbReference>
<dbReference type="GO" id="GO:0019843">
    <property type="term" value="F:rRNA binding"/>
    <property type="evidence" value="ECO:0007669"/>
    <property type="project" value="UniProtKB-UniRule"/>
</dbReference>
<dbReference type="GO" id="GO:0003735">
    <property type="term" value="F:structural constituent of ribosome"/>
    <property type="evidence" value="ECO:0007669"/>
    <property type="project" value="InterPro"/>
</dbReference>
<dbReference type="GO" id="GO:0000028">
    <property type="term" value="P:ribosomal small subunit assembly"/>
    <property type="evidence" value="ECO:0007669"/>
    <property type="project" value="TreeGrafter"/>
</dbReference>
<dbReference type="GO" id="GO:0006412">
    <property type="term" value="P:translation"/>
    <property type="evidence" value="ECO:0007669"/>
    <property type="project" value="UniProtKB-UniRule"/>
</dbReference>
<dbReference type="FunFam" id="3.30.860.10:FF:000001">
    <property type="entry name" value="30S ribosomal protein S19"/>
    <property type="match status" value="1"/>
</dbReference>
<dbReference type="Gene3D" id="3.30.860.10">
    <property type="entry name" value="30s Ribosomal Protein S19, Chain A"/>
    <property type="match status" value="1"/>
</dbReference>
<dbReference type="HAMAP" id="MF_00531">
    <property type="entry name" value="Ribosomal_uS19"/>
    <property type="match status" value="1"/>
</dbReference>
<dbReference type="InterPro" id="IPR002222">
    <property type="entry name" value="Ribosomal_uS19"/>
</dbReference>
<dbReference type="InterPro" id="IPR005732">
    <property type="entry name" value="Ribosomal_uS19_bac-type"/>
</dbReference>
<dbReference type="InterPro" id="IPR020934">
    <property type="entry name" value="Ribosomal_uS19_CS"/>
</dbReference>
<dbReference type="InterPro" id="IPR023575">
    <property type="entry name" value="Ribosomal_uS19_SF"/>
</dbReference>
<dbReference type="NCBIfam" id="TIGR01050">
    <property type="entry name" value="rpsS_bact"/>
    <property type="match status" value="1"/>
</dbReference>
<dbReference type="PANTHER" id="PTHR11880">
    <property type="entry name" value="RIBOSOMAL PROTEIN S19P FAMILY MEMBER"/>
    <property type="match status" value="1"/>
</dbReference>
<dbReference type="PANTHER" id="PTHR11880:SF8">
    <property type="entry name" value="SMALL RIBOSOMAL SUBUNIT PROTEIN US19M"/>
    <property type="match status" value="1"/>
</dbReference>
<dbReference type="Pfam" id="PF00203">
    <property type="entry name" value="Ribosomal_S19"/>
    <property type="match status" value="1"/>
</dbReference>
<dbReference type="PIRSF" id="PIRSF002144">
    <property type="entry name" value="Ribosomal_S19"/>
    <property type="match status" value="1"/>
</dbReference>
<dbReference type="PRINTS" id="PR00975">
    <property type="entry name" value="RIBOSOMALS19"/>
</dbReference>
<dbReference type="SUPFAM" id="SSF54570">
    <property type="entry name" value="Ribosomal protein S19"/>
    <property type="match status" value="1"/>
</dbReference>
<dbReference type="PROSITE" id="PS00323">
    <property type="entry name" value="RIBOSOMAL_S19"/>
    <property type="match status" value="1"/>
</dbReference>
<sequence length="92" mass="10430">MPRSLKKGPFIDLHLLKKVEKAVESGDKKPLRTWSRRSTIFPNMIGLTIAVHNGRQHVPVFVTDEMVGHKLGEFAPTRTYRGHAADKKAKKK</sequence>